<accession>Q5HJ53</accession>
<dbReference type="EC" id="4.1.3.3" evidence="1"/>
<dbReference type="EMBL" id="CP000046">
    <property type="protein sequence ID" value="AAW37519.1"/>
    <property type="molecule type" value="Genomic_DNA"/>
</dbReference>
<dbReference type="RefSeq" id="WP_001030738.1">
    <property type="nucleotide sequence ID" value="NZ_JBGOFO010000001.1"/>
</dbReference>
<dbReference type="SMR" id="Q5HJ53"/>
<dbReference type="KEGG" id="sac:SACOL0312"/>
<dbReference type="HOGENOM" id="CLU_049343_5_1_9"/>
<dbReference type="UniPathway" id="UPA00629">
    <property type="reaction ID" value="UER00680"/>
</dbReference>
<dbReference type="Proteomes" id="UP000000530">
    <property type="component" value="Chromosome"/>
</dbReference>
<dbReference type="GO" id="GO:0005829">
    <property type="term" value="C:cytosol"/>
    <property type="evidence" value="ECO:0007669"/>
    <property type="project" value="TreeGrafter"/>
</dbReference>
<dbReference type="GO" id="GO:0008747">
    <property type="term" value="F:N-acetylneuraminate lyase activity"/>
    <property type="evidence" value="ECO:0007669"/>
    <property type="project" value="UniProtKB-UniRule"/>
</dbReference>
<dbReference type="GO" id="GO:0005975">
    <property type="term" value="P:carbohydrate metabolic process"/>
    <property type="evidence" value="ECO:0007669"/>
    <property type="project" value="UniProtKB-UniRule"/>
</dbReference>
<dbReference type="GO" id="GO:0019262">
    <property type="term" value="P:N-acetylneuraminate catabolic process"/>
    <property type="evidence" value="ECO:0007669"/>
    <property type="project" value="UniProtKB-UniRule"/>
</dbReference>
<dbReference type="CDD" id="cd00954">
    <property type="entry name" value="NAL"/>
    <property type="match status" value="1"/>
</dbReference>
<dbReference type="FunFam" id="3.20.20.70:FF:000039">
    <property type="entry name" value="N-acetylneuraminate lyase"/>
    <property type="match status" value="1"/>
</dbReference>
<dbReference type="Gene3D" id="3.20.20.70">
    <property type="entry name" value="Aldolase class I"/>
    <property type="match status" value="1"/>
</dbReference>
<dbReference type="HAMAP" id="MF_01237">
    <property type="entry name" value="N_acetylneuram_lyase"/>
    <property type="match status" value="1"/>
</dbReference>
<dbReference type="InterPro" id="IPR013785">
    <property type="entry name" value="Aldolase_TIM"/>
</dbReference>
<dbReference type="InterPro" id="IPR002220">
    <property type="entry name" value="DapA-like"/>
</dbReference>
<dbReference type="InterPro" id="IPR005264">
    <property type="entry name" value="NanA"/>
</dbReference>
<dbReference type="InterPro" id="IPR020625">
    <property type="entry name" value="Schiff_base-form_aldolases_AS"/>
</dbReference>
<dbReference type="NCBIfam" id="NF003164">
    <property type="entry name" value="PRK04147.1"/>
    <property type="match status" value="1"/>
</dbReference>
<dbReference type="PANTHER" id="PTHR42849">
    <property type="entry name" value="N-ACETYLNEURAMINATE LYASE"/>
    <property type="match status" value="1"/>
</dbReference>
<dbReference type="PANTHER" id="PTHR42849:SF1">
    <property type="entry name" value="N-ACETYLNEURAMINATE LYASE"/>
    <property type="match status" value="1"/>
</dbReference>
<dbReference type="Pfam" id="PF00701">
    <property type="entry name" value="DHDPS"/>
    <property type="match status" value="1"/>
</dbReference>
<dbReference type="PIRSF" id="PIRSF001365">
    <property type="entry name" value="DHDPS"/>
    <property type="match status" value="1"/>
</dbReference>
<dbReference type="PRINTS" id="PR00146">
    <property type="entry name" value="DHPICSNTHASE"/>
</dbReference>
<dbReference type="SMART" id="SM01130">
    <property type="entry name" value="DHDPS"/>
    <property type="match status" value="1"/>
</dbReference>
<dbReference type="SUPFAM" id="SSF51569">
    <property type="entry name" value="Aldolase"/>
    <property type="match status" value="1"/>
</dbReference>
<dbReference type="PROSITE" id="PS00666">
    <property type="entry name" value="DHDPS_2"/>
    <property type="match status" value="1"/>
</dbReference>
<name>NANA_STAAC</name>
<sequence length="293" mass="33043">MNKDLKGLYAALLVPFDENGQVNEQGLKQIAQNAIETEELDGLYVNGSSGENFLLNTEQKKQVFKVAKEAVGDKVKLIAQVGSLDLNEAIELGKYATELGYDALSAVTPFYYPFTFEEIRDYYFDIIEATQNNMIIYAIPDLTGVNISIEQFSELFNHEKIVGVKYTAPNFFLLERIRKAFPDKLILSGFDEMLVQATISGVDGAIGSTYNVNGRRARKIFDLARQGQIQEAYQLQHDSNDIIETVLSMGIYPTLKEILRHRGIDAGLPKRPFKPFNEAHRQTLDQLIAKYDL</sequence>
<protein>
    <recommendedName>
        <fullName evidence="1">N-acetylneuraminate lyase</fullName>
        <shortName evidence="1">NAL</shortName>
        <shortName evidence="1">Neu5Ac lyase</shortName>
        <ecNumber evidence="1">4.1.3.3</ecNumber>
    </recommendedName>
    <alternativeName>
        <fullName evidence="1">N-acetylneuraminate pyruvate-lyase</fullName>
    </alternativeName>
    <alternativeName>
        <fullName evidence="1">N-acetylneuraminic acid aldolase</fullName>
    </alternativeName>
    <alternativeName>
        <fullName evidence="1">Sialate lyase</fullName>
    </alternativeName>
    <alternativeName>
        <fullName evidence="1">Sialic acid aldolase</fullName>
    </alternativeName>
    <alternativeName>
        <fullName evidence="1">Sialic acid lyase</fullName>
    </alternativeName>
</protein>
<comment type="function">
    <text evidence="1">Catalyzes the reversible aldol cleavage of N-acetylneuraminic acid (sialic acid; Neu5Ac) to form pyruvate and N-acetylmannosamine (ManNAc) via a Schiff base intermediate.</text>
</comment>
<comment type="catalytic activity">
    <reaction evidence="1">
        <text>aceneuramate = aldehydo-N-acetyl-D-mannosamine + pyruvate</text>
        <dbReference type="Rhea" id="RHEA:23296"/>
        <dbReference type="ChEBI" id="CHEBI:15361"/>
        <dbReference type="ChEBI" id="CHEBI:17122"/>
        <dbReference type="ChEBI" id="CHEBI:173083"/>
        <dbReference type="EC" id="4.1.3.3"/>
    </reaction>
</comment>
<comment type="pathway">
    <text evidence="1">Amino-sugar metabolism; N-acetylneuraminate degradation; D-fructose 6-phosphate from N-acetylneuraminate: step 1/5.</text>
</comment>
<comment type="subunit">
    <text evidence="1">Homotetramer.</text>
</comment>
<comment type="subcellular location">
    <subcellularLocation>
        <location evidence="1">Cytoplasm</location>
    </subcellularLocation>
</comment>
<comment type="similarity">
    <text evidence="1">Belongs to the DapA family. NanA subfamily.</text>
</comment>
<evidence type="ECO:0000255" key="1">
    <source>
        <dbReference type="HAMAP-Rule" id="MF_01237"/>
    </source>
</evidence>
<organism>
    <name type="scientific">Staphylococcus aureus (strain COL)</name>
    <dbReference type="NCBI Taxonomy" id="93062"/>
    <lineage>
        <taxon>Bacteria</taxon>
        <taxon>Bacillati</taxon>
        <taxon>Bacillota</taxon>
        <taxon>Bacilli</taxon>
        <taxon>Bacillales</taxon>
        <taxon>Staphylococcaceae</taxon>
        <taxon>Staphylococcus</taxon>
    </lineage>
</organism>
<reference key="1">
    <citation type="journal article" date="2005" name="J. Bacteriol.">
        <title>Insights on evolution of virulence and resistance from the complete genome analysis of an early methicillin-resistant Staphylococcus aureus strain and a biofilm-producing methicillin-resistant Staphylococcus epidermidis strain.</title>
        <authorList>
            <person name="Gill S.R."/>
            <person name="Fouts D.E."/>
            <person name="Archer G.L."/>
            <person name="Mongodin E.F."/>
            <person name="DeBoy R.T."/>
            <person name="Ravel J."/>
            <person name="Paulsen I.T."/>
            <person name="Kolonay J.F."/>
            <person name="Brinkac L.M."/>
            <person name="Beanan M.J."/>
            <person name="Dodson R.J."/>
            <person name="Daugherty S.C."/>
            <person name="Madupu R."/>
            <person name="Angiuoli S.V."/>
            <person name="Durkin A.S."/>
            <person name="Haft D.H."/>
            <person name="Vamathevan J.J."/>
            <person name="Khouri H."/>
            <person name="Utterback T.R."/>
            <person name="Lee C."/>
            <person name="Dimitrov G."/>
            <person name="Jiang L."/>
            <person name="Qin H."/>
            <person name="Weidman J."/>
            <person name="Tran K."/>
            <person name="Kang K.H."/>
            <person name="Hance I.R."/>
            <person name="Nelson K.E."/>
            <person name="Fraser C.M."/>
        </authorList>
    </citation>
    <scope>NUCLEOTIDE SEQUENCE [LARGE SCALE GENOMIC DNA]</scope>
    <source>
        <strain>COL</strain>
    </source>
</reference>
<gene>
    <name evidence="1" type="primary">nanA</name>
    <name type="ordered locus">SACOL0312</name>
</gene>
<proteinExistence type="inferred from homology"/>
<feature type="chain" id="PRO_0000103221" description="N-acetylneuraminate lyase">
    <location>
        <begin position="1"/>
        <end position="293"/>
    </location>
</feature>
<feature type="active site" description="Proton donor" evidence="1">
    <location>
        <position position="137"/>
    </location>
</feature>
<feature type="active site" description="Schiff-base intermediate with substrate" evidence="1">
    <location>
        <position position="165"/>
    </location>
</feature>
<feature type="binding site" evidence="1">
    <location>
        <position position="48"/>
    </location>
    <ligand>
        <name>aceneuramate</name>
        <dbReference type="ChEBI" id="CHEBI:173083"/>
    </ligand>
</feature>
<feature type="binding site" evidence="1">
    <location>
        <position position="49"/>
    </location>
    <ligand>
        <name>aceneuramate</name>
        <dbReference type="ChEBI" id="CHEBI:173083"/>
    </ligand>
</feature>
<feature type="binding site" evidence="1">
    <location>
        <position position="167"/>
    </location>
    <ligand>
        <name>aceneuramate</name>
        <dbReference type="ChEBI" id="CHEBI:173083"/>
    </ligand>
</feature>
<feature type="binding site" evidence="1">
    <location>
        <position position="189"/>
    </location>
    <ligand>
        <name>aceneuramate</name>
        <dbReference type="ChEBI" id="CHEBI:173083"/>
    </ligand>
</feature>
<feature type="binding site" evidence="1">
    <location>
        <position position="191"/>
    </location>
    <ligand>
        <name>aceneuramate</name>
        <dbReference type="ChEBI" id="CHEBI:173083"/>
    </ligand>
</feature>
<feature type="binding site" evidence="1">
    <location>
        <position position="192"/>
    </location>
    <ligand>
        <name>aceneuramate</name>
        <dbReference type="ChEBI" id="CHEBI:173083"/>
    </ligand>
</feature>
<feature type="binding site" evidence="1">
    <location>
        <position position="208"/>
    </location>
    <ligand>
        <name>aceneuramate</name>
        <dbReference type="ChEBI" id="CHEBI:173083"/>
    </ligand>
</feature>
<keyword id="KW-0119">Carbohydrate metabolism</keyword>
<keyword id="KW-0963">Cytoplasm</keyword>
<keyword id="KW-0456">Lyase</keyword>
<keyword id="KW-0704">Schiff base</keyword>